<sequence>MQVTFLGTSSGVPTRARNVSAVALRLPQRSEMWLFDCGEGTQHQFLRSELRLSQLRRVFVTHMHGDHVFGLPGLLASLGLAGNSNEGVDLYGPDPLESYLNGVLRTSSTRIGYPLKVHRVHDCAENGTLVYEDDDLMVRCTPLTHRVPAYAYRVDQKPLAGRFDIAKAKDLQIPPGPIYAQLKRGDTVTLEDGRVIDGTTLCGPERPGVSVVYCTDTVFCEAAVDLAQGADLLIHESTFAHQESEMAYQKQHSTSTMAAQTAAEANVGQLVLTHLSPRYAPGNAVTPEDLLKEAQAIFPNTCLAKDFLTLEVKPRCNSL</sequence>
<protein>
    <recommendedName>
        <fullName evidence="1">Ribonuclease Z</fullName>
        <shortName evidence="1">RNase Z</shortName>
        <ecNumber evidence="1">3.1.26.11</ecNumber>
    </recommendedName>
    <alternativeName>
        <fullName evidence="1">tRNA 3 endonuclease</fullName>
    </alternativeName>
    <alternativeName>
        <fullName evidence="1">tRNase Z</fullName>
    </alternativeName>
</protein>
<feature type="chain" id="PRO_1000070347" description="Ribonuclease Z">
    <location>
        <begin position="1"/>
        <end position="319"/>
    </location>
</feature>
<feature type="active site" description="Proton acceptor" evidence="1">
    <location>
        <position position="66"/>
    </location>
</feature>
<feature type="binding site" evidence="1">
    <location>
        <position position="62"/>
    </location>
    <ligand>
        <name>Zn(2+)</name>
        <dbReference type="ChEBI" id="CHEBI:29105"/>
        <label>1</label>
        <note>catalytic</note>
    </ligand>
</feature>
<feature type="binding site" evidence="1">
    <location>
        <position position="64"/>
    </location>
    <ligand>
        <name>Zn(2+)</name>
        <dbReference type="ChEBI" id="CHEBI:29105"/>
        <label>1</label>
        <note>catalytic</note>
    </ligand>
</feature>
<feature type="binding site" evidence="1">
    <location>
        <position position="66"/>
    </location>
    <ligand>
        <name>Zn(2+)</name>
        <dbReference type="ChEBI" id="CHEBI:29105"/>
        <label>2</label>
        <note>catalytic</note>
    </ligand>
</feature>
<feature type="binding site" evidence="1">
    <location>
        <position position="67"/>
    </location>
    <ligand>
        <name>Zn(2+)</name>
        <dbReference type="ChEBI" id="CHEBI:29105"/>
        <label>2</label>
        <note>catalytic</note>
    </ligand>
</feature>
<feature type="binding site" evidence="1">
    <location>
        <position position="145"/>
    </location>
    <ligand>
        <name>Zn(2+)</name>
        <dbReference type="ChEBI" id="CHEBI:29105"/>
        <label>1</label>
        <note>catalytic</note>
    </ligand>
</feature>
<feature type="binding site" evidence="1">
    <location>
        <position position="216"/>
    </location>
    <ligand>
        <name>Zn(2+)</name>
        <dbReference type="ChEBI" id="CHEBI:29105"/>
        <label>1</label>
        <note>catalytic</note>
    </ligand>
</feature>
<feature type="binding site" evidence="1">
    <location>
        <position position="216"/>
    </location>
    <ligand>
        <name>Zn(2+)</name>
        <dbReference type="ChEBI" id="CHEBI:29105"/>
        <label>2</label>
        <note>catalytic</note>
    </ligand>
</feature>
<feature type="binding site" evidence="1">
    <location>
        <position position="274"/>
    </location>
    <ligand>
        <name>Zn(2+)</name>
        <dbReference type="ChEBI" id="CHEBI:29105"/>
        <label>2</label>
        <note>catalytic</note>
    </ligand>
</feature>
<dbReference type="EC" id="3.1.26.11" evidence="1"/>
<dbReference type="EMBL" id="CP000097">
    <property type="protein sequence ID" value="ABB25500.1"/>
    <property type="molecule type" value="Genomic_DNA"/>
</dbReference>
<dbReference type="RefSeq" id="WP_011359347.1">
    <property type="nucleotide sequence ID" value="NC_007513.1"/>
</dbReference>
<dbReference type="SMR" id="Q3AZH7"/>
<dbReference type="STRING" id="316279.Syncc9902_0532"/>
<dbReference type="KEGG" id="sye:Syncc9902_0532"/>
<dbReference type="eggNOG" id="COG1234">
    <property type="taxonomic scope" value="Bacteria"/>
</dbReference>
<dbReference type="HOGENOM" id="CLU_031317_2_0_3"/>
<dbReference type="OrthoDB" id="9800940at2"/>
<dbReference type="Proteomes" id="UP000002712">
    <property type="component" value="Chromosome"/>
</dbReference>
<dbReference type="GO" id="GO:0042781">
    <property type="term" value="F:3'-tRNA processing endoribonuclease activity"/>
    <property type="evidence" value="ECO:0007669"/>
    <property type="project" value="UniProtKB-UniRule"/>
</dbReference>
<dbReference type="GO" id="GO:0008270">
    <property type="term" value="F:zinc ion binding"/>
    <property type="evidence" value="ECO:0007669"/>
    <property type="project" value="UniProtKB-UniRule"/>
</dbReference>
<dbReference type="CDD" id="cd07717">
    <property type="entry name" value="RNaseZ_ZiPD-like_MBL-fold"/>
    <property type="match status" value="1"/>
</dbReference>
<dbReference type="FunFam" id="3.60.15.10:FF:000002">
    <property type="entry name" value="Ribonuclease Z"/>
    <property type="match status" value="1"/>
</dbReference>
<dbReference type="Gene3D" id="3.60.15.10">
    <property type="entry name" value="Ribonuclease Z/Hydroxyacylglutathione hydrolase-like"/>
    <property type="match status" value="1"/>
</dbReference>
<dbReference type="HAMAP" id="MF_01818">
    <property type="entry name" value="RNase_Z_BN"/>
    <property type="match status" value="1"/>
</dbReference>
<dbReference type="InterPro" id="IPR001279">
    <property type="entry name" value="Metallo-B-lactamas"/>
</dbReference>
<dbReference type="InterPro" id="IPR036866">
    <property type="entry name" value="RibonucZ/Hydroxyglut_hydro"/>
</dbReference>
<dbReference type="InterPro" id="IPR013471">
    <property type="entry name" value="RNase_Z/BN"/>
</dbReference>
<dbReference type="NCBIfam" id="NF000801">
    <property type="entry name" value="PRK00055.1-3"/>
    <property type="match status" value="1"/>
</dbReference>
<dbReference type="NCBIfam" id="TIGR02651">
    <property type="entry name" value="RNase_Z"/>
    <property type="match status" value="1"/>
</dbReference>
<dbReference type="PANTHER" id="PTHR46018">
    <property type="entry name" value="ZINC PHOSPHODIESTERASE ELAC PROTEIN 1"/>
    <property type="match status" value="1"/>
</dbReference>
<dbReference type="PANTHER" id="PTHR46018:SF2">
    <property type="entry name" value="ZINC PHOSPHODIESTERASE ELAC PROTEIN 1"/>
    <property type="match status" value="1"/>
</dbReference>
<dbReference type="Pfam" id="PF12706">
    <property type="entry name" value="Lactamase_B_2"/>
    <property type="match status" value="2"/>
</dbReference>
<dbReference type="SUPFAM" id="SSF56281">
    <property type="entry name" value="Metallo-hydrolase/oxidoreductase"/>
    <property type="match status" value="1"/>
</dbReference>
<proteinExistence type="inferred from homology"/>
<accession>Q3AZH7</accession>
<comment type="function">
    <text evidence="1">Zinc phosphodiesterase, which displays some tRNA 3'-processing endonuclease activity. Probably involved in tRNA maturation, by removing a 3'-trailer from precursor tRNA.</text>
</comment>
<comment type="catalytic activity">
    <reaction evidence="1">
        <text>Endonucleolytic cleavage of RNA, removing extra 3' nucleotides from tRNA precursor, generating 3' termini of tRNAs. A 3'-hydroxy group is left at the tRNA terminus and a 5'-phosphoryl group is left at the trailer molecule.</text>
        <dbReference type="EC" id="3.1.26.11"/>
    </reaction>
</comment>
<comment type="cofactor">
    <cofactor evidence="1">
        <name>Zn(2+)</name>
        <dbReference type="ChEBI" id="CHEBI:29105"/>
    </cofactor>
    <text evidence="1">Binds 2 Zn(2+) ions.</text>
</comment>
<comment type="subunit">
    <text evidence="1">Homodimer.</text>
</comment>
<comment type="similarity">
    <text evidence="1">Belongs to the RNase Z family.</text>
</comment>
<keyword id="KW-0255">Endonuclease</keyword>
<keyword id="KW-0378">Hydrolase</keyword>
<keyword id="KW-0479">Metal-binding</keyword>
<keyword id="KW-0540">Nuclease</keyword>
<keyword id="KW-1185">Reference proteome</keyword>
<keyword id="KW-0819">tRNA processing</keyword>
<keyword id="KW-0862">Zinc</keyword>
<name>RNZ_SYNS9</name>
<gene>
    <name evidence="1" type="primary">rnz</name>
    <name type="ordered locus">Syncc9902_0532</name>
</gene>
<reference key="1">
    <citation type="submission" date="2005-08" db="EMBL/GenBank/DDBJ databases">
        <title>Complete sequence of Synechococcus sp. CC9902.</title>
        <authorList>
            <person name="Copeland A."/>
            <person name="Lucas S."/>
            <person name="Lapidus A."/>
            <person name="Barry K."/>
            <person name="Detter J.C."/>
            <person name="Glavina T."/>
            <person name="Hammon N."/>
            <person name="Israni S."/>
            <person name="Pitluck S."/>
            <person name="Martinez M."/>
            <person name="Schmutz J."/>
            <person name="Larimer F."/>
            <person name="Land M."/>
            <person name="Kyrpides N."/>
            <person name="Ivanova N."/>
            <person name="Richardson P."/>
        </authorList>
    </citation>
    <scope>NUCLEOTIDE SEQUENCE [LARGE SCALE GENOMIC DNA]</scope>
    <source>
        <strain>CC9902</strain>
    </source>
</reference>
<evidence type="ECO:0000255" key="1">
    <source>
        <dbReference type="HAMAP-Rule" id="MF_01818"/>
    </source>
</evidence>
<organism>
    <name type="scientific">Synechococcus sp. (strain CC9902)</name>
    <dbReference type="NCBI Taxonomy" id="316279"/>
    <lineage>
        <taxon>Bacteria</taxon>
        <taxon>Bacillati</taxon>
        <taxon>Cyanobacteriota</taxon>
        <taxon>Cyanophyceae</taxon>
        <taxon>Synechococcales</taxon>
        <taxon>Synechococcaceae</taxon>
        <taxon>Synechococcus</taxon>
    </lineage>
</organism>